<reference key="1">
    <citation type="journal article" date="2006" name="Mol. Biol. Rep.">
        <title>Identification and characterization of two rice autophagy associated genes, OsAtg8 and OsAtg4.</title>
        <authorList>
            <person name="Su W."/>
            <person name="Ma H."/>
            <person name="Liu C."/>
            <person name="Wu J."/>
            <person name="Yang J."/>
        </authorList>
    </citation>
    <scope>NUCLEOTIDE SEQUENCE [MRNA]</scope>
    <scope>FUNCTION</scope>
    <scope>TISSUE SPECIFICITY</scope>
    <scope>INTERACTION WITH ATG4</scope>
    <scope>MUTAGENESIS OF GLY-117</scope>
</reference>
<reference key="2">
    <citation type="journal article" date="2005" name="PLoS Biol.">
        <title>The genomes of Oryza sativa: a history of duplications.</title>
        <authorList>
            <person name="Yu J."/>
            <person name="Wang J."/>
            <person name="Lin W."/>
            <person name="Li S."/>
            <person name="Li H."/>
            <person name="Zhou J."/>
            <person name="Ni P."/>
            <person name="Dong W."/>
            <person name="Hu S."/>
            <person name="Zeng C."/>
            <person name="Zhang J."/>
            <person name="Zhang Y."/>
            <person name="Li R."/>
            <person name="Xu Z."/>
            <person name="Li S."/>
            <person name="Li X."/>
            <person name="Zheng H."/>
            <person name="Cong L."/>
            <person name="Lin L."/>
            <person name="Yin J."/>
            <person name="Geng J."/>
            <person name="Li G."/>
            <person name="Shi J."/>
            <person name="Liu J."/>
            <person name="Lv H."/>
            <person name="Li J."/>
            <person name="Wang J."/>
            <person name="Deng Y."/>
            <person name="Ran L."/>
            <person name="Shi X."/>
            <person name="Wang X."/>
            <person name="Wu Q."/>
            <person name="Li C."/>
            <person name="Ren X."/>
            <person name="Wang J."/>
            <person name="Wang X."/>
            <person name="Li D."/>
            <person name="Liu D."/>
            <person name="Zhang X."/>
            <person name="Ji Z."/>
            <person name="Zhao W."/>
            <person name="Sun Y."/>
            <person name="Zhang Z."/>
            <person name="Bao J."/>
            <person name="Han Y."/>
            <person name="Dong L."/>
            <person name="Ji J."/>
            <person name="Chen P."/>
            <person name="Wu S."/>
            <person name="Liu J."/>
            <person name="Xiao Y."/>
            <person name="Bu D."/>
            <person name="Tan J."/>
            <person name="Yang L."/>
            <person name="Ye C."/>
            <person name="Zhang J."/>
            <person name="Xu J."/>
            <person name="Zhou Y."/>
            <person name="Yu Y."/>
            <person name="Zhang B."/>
            <person name="Zhuang S."/>
            <person name="Wei H."/>
            <person name="Liu B."/>
            <person name="Lei M."/>
            <person name="Yu H."/>
            <person name="Li Y."/>
            <person name="Xu H."/>
            <person name="Wei S."/>
            <person name="He X."/>
            <person name="Fang L."/>
            <person name="Zhang Z."/>
            <person name="Zhang Y."/>
            <person name="Huang X."/>
            <person name="Su Z."/>
            <person name="Tong W."/>
            <person name="Li J."/>
            <person name="Tong Z."/>
            <person name="Li S."/>
            <person name="Ye J."/>
            <person name="Wang L."/>
            <person name="Fang L."/>
            <person name="Lei T."/>
            <person name="Chen C.-S."/>
            <person name="Chen H.-C."/>
            <person name="Xu Z."/>
            <person name="Li H."/>
            <person name="Huang H."/>
            <person name="Zhang F."/>
            <person name="Xu H."/>
            <person name="Li N."/>
            <person name="Zhao C."/>
            <person name="Li S."/>
            <person name="Dong L."/>
            <person name="Huang Y."/>
            <person name="Li L."/>
            <person name="Xi Y."/>
            <person name="Qi Q."/>
            <person name="Li W."/>
            <person name="Zhang B."/>
            <person name="Hu W."/>
            <person name="Zhang Y."/>
            <person name="Tian X."/>
            <person name="Jiao Y."/>
            <person name="Liang X."/>
            <person name="Jin J."/>
            <person name="Gao L."/>
            <person name="Zheng W."/>
            <person name="Hao B."/>
            <person name="Liu S.-M."/>
            <person name="Wang W."/>
            <person name="Yuan L."/>
            <person name="Cao M."/>
            <person name="McDermott J."/>
            <person name="Samudrala R."/>
            <person name="Wang J."/>
            <person name="Wong G.K.-S."/>
            <person name="Yang H."/>
        </authorList>
    </citation>
    <scope>NUCLEOTIDE SEQUENCE [LARGE SCALE GENOMIC DNA]</scope>
    <source>
        <strain>cv. 93-11</strain>
    </source>
</reference>
<comment type="function">
    <text evidence="1 4">Ubiquitin-like modifier involved in cytoplasm to vacuole transport (Cvt) vesicles and autophagosomes formation. May mediate the delivery of the vesicles and autophagosomes to the vacuole via the microtubule cytoskeleton (By similarity).</text>
</comment>
<comment type="function">
    <text evidence="2">Ubiquitin-like modifier involved in autophagosomes formation. May mediate the delivery of the autophagosomes to the vacuole via the microtubule cytoskeleton.</text>
</comment>
<comment type="subunit">
    <text evidence="4">Interacts with ATG4.</text>
</comment>
<comment type="subcellular location">
    <subcellularLocation>
        <location evidence="2">Cytoplasmic vesicle</location>
        <location evidence="2">Autophagosome membrane</location>
        <topology evidence="2">Lipid-anchor</topology>
    </subcellularLocation>
    <subcellularLocation>
        <location evidence="2">Vacuole membrane</location>
        <topology evidence="2">Lipid-anchor</topology>
    </subcellularLocation>
    <subcellularLocation>
        <location evidence="3">Cytoplasm</location>
        <location evidence="3">Cytoskeleton</location>
    </subcellularLocation>
</comment>
<comment type="tissue specificity">
    <text evidence="4">Constitutively expressed.</text>
</comment>
<comment type="PTM">
    <text evidence="2">The C-terminal 2 residues are removed by ATG4 to expose Gly-117 at the C-terminus. The C-terminal Gly is then amidated with phosphatidylethanolamine by an activating system similar to that for ubiquitin.</text>
</comment>
<comment type="similarity">
    <text evidence="5">Belongs to the ATG8 family.</text>
</comment>
<feature type="chain" id="PRO_0000286921" description="Autophagy-related protein 8A">
    <location>
        <begin position="1"/>
        <end position="117"/>
    </location>
</feature>
<feature type="propeptide" id="PRO_0000286922" description="Removed in mature form" evidence="6">
    <location>
        <begin position="118"/>
        <end position="119"/>
    </location>
</feature>
<feature type="site" description="Cleavage; by ATG4" evidence="6">
    <location>
        <begin position="117"/>
        <end position="118"/>
    </location>
</feature>
<feature type="lipid moiety-binding region" description="Phosphatidylethanolamine amidated glycine" evidence="2">
    <location>
        <position position="117"/>
    </location>
</feature>
<feature type="mutagenesis site" description="Abrogation of its C-terminal cleavage by ATG4." evidence="4">
    <original>G</original>
    <variation>A</variation>
    <location>
        <position position="117"/>
    </location>
</feature>
<sequence length="119" mass="13664">MARTSFKLEHPLERRQAESARIREKYSDRIPVIVEKADKTDVPEIDKKKYLVPADLTVGQFVYVVRKRIKLSPEKAIFVFVKNTLPPTASLMSAIYEENKDEDGFLYMTYSGENTFGSA</sequence>
<gene>
    <name type="primary">ATG8A</name>
    <name type="synonym">APG8</name>
    <name type="synonym">APG8A</name>
    <name type="ORF">OsI_025264</name>
</gene>
<name>ATG8A_ORYSI</name>
<protein>
    <recommendedName>
        <fullName>Autophagy-related protein 8A</fullName>
    </recommendedName>
    <alternativeName>
        <fullName>Autophagy-related ubiquitin-like modifier ATG8A</fullName>
        <shortName>Protein autophagy 8</shortName>
    </alternativeName>
    <alternativeName>
        <fullName>OsAtg8</fullName>
    </alternativeName>
</protein>
<organism>
    <name type="scientific">Oryza sativa subsp. indica</name>
    <name type="common">Rice</name>
    <dbReference type="NCBI Taxonomy" id="39946"/>
    <lineage>
        <taxon>Eukaryota</taxon>
        <taxon>Viridiplantae</taxon>
        <taxon>Streptophyta</taxon>
        <taxon>Embryophyta</taxon>
        <taxon>Tracheophyta</taxon>
        <taxon>Spermatophyta</taxon>
        <taxon>Magnoliopsida</taxon>
        <taxon>Liliopsida</taxon>
        <taxon>Poales</taxon>
        <taxon>Poaceae</taxon>
        <taxon>BOP clade</taxon>
        <taxon>Oryzoideae</taxon>
        <taxon>Oryzeae</taxon>
        <taxon>Oryzinae</taxon>
        <taxon>Oryza</taxon>
        <taxon>Oryza sativa</taxon>
    </lineage>
</organism>
<accession>Q2XPP5</accession>
<keyword id="KW-0072">Autophagy</keyword>
<keyword id="KW-0963">Cytoplasm</keyword>
<keyword id="KW-0968">Cytoplasmic vesicle</keyword>
<keyword id="KW-0206">Cytoskeleton</keyword>
<keyword id="KW-0449">Lipoprotein</keyword>
<keyword id="KW-0472">Membrane</keyword>
<keyword id="KW-0493">Microtubule</keyword>
<keyword id="KW-0653">Protein transport</keyword>
<keyword id="KW-1185">Reference proteome</keyword>
<keyword id="KW-0813">Transport</keyword>
<keyword id="KW-0833">Ubl conjugation pathway</keyword>
<keyword id="KW-0926">Vacuole</keyword>
<proteinExistence type="evidence at protein level"/>
<dbReference type="EMBL" id="DQ269983">
    <property type="protein sequence ID" value="ABB77258.1"/>
    <property type="molecule type" value="mRNA"/>
</dbReference>
<dbReference type="EMBL" id="CM000132">
    <property type="protein sequence ID" value="EAZ04032.1"/>
    <property type="molecule type" value="Genomic_DNA"/>
</dbReference>
<dbReference type="SMR" id="Q2XPP5"/>
<dbReference type="STRING" id="39946.Q2XPP5"/>
<dbReference type="EnsemblPlants" id="BGIOSGA024235-TA">
    <property type="protein sequence ID" value="BGIOSGA024235-PA"/>
    <property type="gene ID" value="BGIOSGA024235"/>
</dbReference>
<dbReference type="EnsemblPlants" id="OsGoSa_07g0016260.01">
    <property type="protein sequence ID" value="OsGoSa_07g0016260.01"/>
    <property type="gene ID" value="OsGoSa_07g0016260"/>
</dbReference>
<dbReference type="EnsemblPlants" id="OsIR64_07g0016840.02">
    <property type="protein sequence ID" value="OsIR64_07g0016840.02"/>
    <property type="gene ID" value="OsIR64_07g0016840"/>
</dbReference>
<dbReference type="EnsemblPlants" id="OsKYG_07g0016260.03">
    <property type="protein sequence ID" value="OsKYG_07g0016260.03"/>
    <property type="gene ID" value="OsKYG_07g0016260"/>
</dbReference>
<dbReference type="EnsemblPlants" id="OsLaMu_07g0016290.02">
    <property type="protein sequence ID" value="OsLaMu_07g0016290.02"/>
    <property type="gene ID" value="OsLaMu_07g0016290"/>
</dbReference>
<dbReference type="EnsemblPlants" id="OsLaMu_07g0016290.04">
    <property type="protein sequence ID" value="OsLaMu_07g0016290.04"/>
    <property type="gene ID" value="OsLaMu_07g0016290"/>
</dbReference>
<dbReference type="EnsemblPlants" id="OsLima_07g0016080.02">
    <property type="protein sequence ID" value="OsLima_07g0016080.02"/>
    <property type="gene ID" value="OsLima_07g0016080"/>
</dbReference>
<dbReference type="EnsemblPlants" id="OsLiXu_07g0016520.02">
    <property type="protein sequence ID" value="OsLiXu_07g0016520.02"/>
    <property type="gene ID" value="OsLiXu_07g0016520"/>
</dbReference>
<dbReference type="EnsemblPlants" id="OsMH63_07G016180_03">
    <property type="protein sequence ID" value="OsMH63_07G016180_03"/>
    <property type="gene ID" value="OsMH63_07G016180"/>
</dbReference>
<dbReference type="EnsemblPlants" id="OsPr106_07g0016370.03">
    <property type="protein sequence ID" value="OsPr106_07g0016370.03"/>
    <property type="gene ID" value="OsPr106_07g0016370"/>
</dbReference>
<dbReference type="EnsemblPlants" id="OsPr106_07g0016370.04">
    <property type="protein sequence ID" value="OsPr106_07g0016370.04"/>
    <property type="gene ID" value="OsPr106_07g0016370"/>
</dbReference>
<dbReference type="EnsemblPlants" id="OsZS97_07G016210_01">
    <property type="protein sequence ID" value="OsZS97_07G016210_01"/>
    <property type="gene ID" value="OsZS97_07G016210"/>
</dbReference>
<dbReference type="EnsemblPlants" id="OsZS97_07G016210_06">
    <property type="protein sequence ID" value="OsZS97_07G016210_06"/>
    <property type="gene ID" value="OsZS97_07G016210"/>
</dbReference>
<dbReference type="Gramene" id="BGIOSGA024235-TA">
    <property type="protein sequence ID" value="BGIOSGA024235-PA"/>
    <property type="gene ID" value="BGIOSGA024235"/>
</dbReference>
<dbReference type="Gramene" id="OsGoSa_07g0016260.01">
    <property type="protein sequence ID" value="OsGoSa_07g0016260.01"/>
    <property type="gene ID" value="OsGoSa_07g0016260"/>
</dbReference>
<dbReference type="Gramene" id="OsIR64_07g0016840.02">
    <property type="protein sequence ID" value="OsIR64_07g0016840.02"/>
    <property type="gene ID" value="OsIR64_07g0016840"/>
</dbReference>
<dbReference type="Gramene" id="OsKYG_07g0016260.03">
    <property type="protein sequence ID" value="OsKYG_07g0016260.03"/>
    <property type="gene ID" value="OsKYG_07g0016260"/>
</dbReference>
<dbReference type="Gramene" id="OsLaMu_07g0016290.02">
    <property type="protein sequence ID" value="OsLaMu_07g0016290.02"/>
    <property type="gene ID" value="OsLaMu_07g0016290"/>
</dbReference>
<dbReference type="Gramene" id="OsLaMu_07g0016290.04">
    <property type="protein sequence ID" value="OsLaMu_07g0016290.04"/>
    <property type="gene ID" value="OsLaMu_07g0016290"/>
</dbReference>
<dbReference type="Gramene" id="OsLima_07g0016080.02">
    <property type="protein sequence ID" value="OsLima_07g0016080.02"/>
    <property type="gene ID" value="OsLima_07g0016080"/>
</dbReference>
<dbReference type="Gramene" id="OsLiXu_07g0016520.02">
    <property type="protein sequence ID" value="OsLiXu_07g0016520.02"/>
    <property type="gene ID" value="OsLiXu_07g0016520"/>
</dbReference>
<dbReference type="Gramene" id="OsMH63_07G016180_03">
    <property type="protein sequence ID" value="OsMH63_07G016180_03"/>
    <property type="gene ID" value="OsMH63_07G016180"/>
</dbReference>
<dbReference type="Gramene" id="OsPr106_07g0016370.03">
    <property type="protein sequence ID" value="OsPr106_07g0016370.03"/>
    <property type="gene ID" value="OsPr106_07g0016370"/>
</dbReference>
<dbReference type="Gramene" id="OsPr106_07g0016370.04">
    <property type="protein sequence ID" value="OsPr106_07g0016370.04"/>
    <property type="gene ID" value="OsPr106_07g0016370"/>
</dbReference>
<dbReference type="Gramene" id="OsZS97_07G016210_01">
    <property type="protein sequence ID" value="OsZS97_07G016210_01"/>
    <property type="gene ID" value="OsZS97_07G016210"/>
</dbReference>
<dbReference type="Gramene" id="OsZS97_07G016210_06">
    <property type="protein sequence ID" value="OsZS97_07G016210_06"/>
    <property type="gene ID" value="OsZS97_07G016210"/>
</dbReference>
<dbReference type="HOGENOM" id="CLU_119276_0_1_1"/>
<dbReference type="OMA" id="KNQIRAK"/>
<dbReference type="OrthoDB" id="6738456at2759"/>
<dbReference type="Proteomes" id="UP000007015">
    <property type="component" value="Chromosome 7"/>
</dbReference>
<dbReference type="GO" id="GO:0000421">
    <property type="term" value="C:autophagosome membrane"/>
    <property type="evidence" value="ECO:0007669"/>
    <property type="project" value="UniProtKB-SubCell"/>
</dbReference>
<dbReference type="GO" id="GO:0031410">
    <property type="term" value="C:cytoplasmic vesicle"/>
    <property type="evidence" value="ECO:0007669"/>
    <property type="project" value="UniProtKB-KW"/>
</dbReference>
<dbReference type="GO" id="GO:0005874">
    <property type="term" value="C:microtubule"/>
    <property type="evidence" value="ECO:0007669"/>
    <property type="project" value="UniProtKB-KW"/>
</dbReference>
<dbReference type="GO" id="GO:0006914">
    <property type="term" value="P:autophagy"/>
    <property type="evidence" value="ECO:0007669"/>
    <property type="project" value="UniProtKB-KW"/>
</dbReference>
<dbReference type="GO" id="GO:0015031">
    <property type="term" value="P:protein transport"/>
    <property type="evidence" value="ECO:0007669"/>
    <property type="project" value="UniProtKB-KW"/>
</dbReference>
<dbReference type="CDD" id="cd16128">
    <property type="entry name" value="Ubl_ATG8"/>
    <property type="match status" value="1"/>
</dbReference>
<dbReference type="FunFam" id="3.10.20.90:FF:000010">
    <property type="entry name" value="Autophagy-related protein"/>
    <property type="match status" value="1"/>
</dbReference>
<dbReference type="Gene3D" id="3.10.20.90">
    <property type="entry name" value="Phosphatidylinositol 3-kinase Catalytic Subunit, Chain A, domain 1"/>
    <property type="match status" value="1"/>
</dbReference>
<dbReference type="InterPro" id="IPR004241">
    <property type="entry name" value="Atg8-like"/>
</dbReference>
<dbReference type="InterPro" id="IPR029071">
    <property type="entry name" value="Ubiquitin-like_domsf"/>
</dbReference>
<dbReference type="PANTHER" id="PTHR10969">
    <property type="entry name" value="MICROTUBULE-ASSOCIATED PROTEINS 1A/1B LIGHT CHAIN 3-RELATED"/>
    <property type="match status" value="1"/>
</dbReference>
<dbReference type="Pfam" id="PF02991">
    <property type="entry name" value="ATG8"/>
    <property type="match status" value="1"/>
</dbReference>
<dbReference type="SUPFAM" id="SSF54236">
    <property type="entry name" value="Ubiquitin-like"/>
    <property type="match status" value="1"/>
</dbReference>
<evidence type="ECO:0000250" key="1"/>
<evidence type="ECO:0000250" key="2">
    <source>
        <dbReference type="UniProtKB" id="P38182"/>
    </source>
</evidence>
<evidence type="ECO:0000250" key="3">
    <source>
        <dbReference type="UniProtKB" id="Q8LEM4"/>
    </source>
</evidence>
<evidence type="ECO:0000269" key="4">
    <source>
    </source>
</evidence>
<evidence type="ECO:0000305" key="5"/>
<evidence type="ECO:0000305" key="6">
    <source>
    </source>
</evidence>